<keyword id="KW-1185">Reference proteome</keyword>
<keyword id="KW-0687">Ribonucleoprotein</keyword>
<keyword id="KW-0689">Ribosomal protein</keyword>
<keyword id="KW-0694">RNA-binding</keyword>
<keyword id="KW-0699">rRNA-binding</keyword>
<comment type="function">
    <text evidence="1">One of the primary rRNA binding proteins, it binds directly to 16S rRNA where it nucleates assembly of the body of the 30S subunit.</text>
</comment>
<comment type="function">
    <text evidence="1">With S5 and S12 plays an important role in translational accuracy.</text>
</comment>
<comment type="subunit">
    <text evidence="1">Part of the 30S ribosomal subunit. Contacts protein S5. The interaction surface between S4 and S5 is involved in control of translational fidelity.</text>
</comment>
<comment type="similarity">
    <text evidence="1">Belongs to the universal ribosomal protein uS4 family.</text>
</comment>
<gene>
    <name evidence="1" type="primary">rpsD</name>
    <name type="ordered locus">SGO_2098</name>
</gene>
<name>RS4_STRGC</name>
<feature type="chain" id="PRO_0000322339" description="Small ribosomal subunit protein uS4">
    <location>
        <begin position="1"/>
        <end position="203"/>
    </location>
</feature>
<feature type="domain" description="S4 RNA-binding" evidence="1">
    <location>
        <begin position="93"/>
        <end position="156"/>
    </location>
</feature>
<proteinExistence type="inferred from homology"/>
<evidence type="ECO:0000255" key="1">
    <source>
        <dbReference type="HAMAP-Rule" id="MF_01306"/>
    </source>
</evidence>
<evidence type="ECO:0000305" key="2"/>
<reference key="1">
    <citation type="journal article" date="2007" name="J. Bacteriol.">
        <title>Genome-wide transcriptional changes in Streptococcus gordonii in response to competence signaling peptide.</title>
        <authorList>
            <person name="Vickerman M.M."/>
            <person name="Iobst S."/>
            <person name="Jesionowski A.M."/>
            <person name="Gill S.R."/>
        </authorList>
    </citation>
    <scope>NUCLEOTIDE SEQUENCE [LARGE SCALE GENOMIC DNA]</scope>
    <source>
        <strain>Challis / ATCC 35105 / BCRC 15272 / CH1 / DL1 / V288</strain>
    </source>
</reference>
<organism>
    <name type="scientific">Streptococcus gordonii (strain Challis / ATCC 35105 / BCRC 15272 / CH1 / DL1 / V288)</name>
    <dbReference type="NCBI Taxonomy" id="467705"/>
    <lineage>
        <taxon>Bacteria</taxon>
        <taxon>Bacillati</taxon>
        <taxon>Bacillota</taxon>
        <taxon>Bacilli</taxon>
        <taxon>Lactobacillales</taxon>
        <taxon>Streptococcaceae</taxon>
        <taxon>Streptococcus</taxon>
    </lineage>
</organism>
<dbReference type="EMBL" id="CP000725">
    <property type="protein sequence ID" value="ABV09848.1"/>
    <property type="molecule type" value="Genomic_DNA"/>
</dbReference>
<dbReference type="RefSeq" id="WP_008810013.1">
    <property type="nucleotide sequence ID" value="NC_009785.1"/>
</dbReference>
<dbReference type="SMR" id="A8AZY6"/>
<dbReference type="STRING" id="467705.SGO_2098"/>
<dbReference type="GeneID" id="93786744"/>
<dbReference type="KEGG" id="sgo:SGO_2098"/>
<dbReference type="eggNOG" id="COG0522">
    <property type="taxonomic scope" value="Bacteria"/>
</dbReference>
<dbReference type="HOGENOM" id="CLU_092403_0_1_9"/>
<dbReference type="Proteomes" id="UP000001131">
    <property type="component" value="Chromosome"/>
</dbReference>
<dbReference type="GO" id="GO:0015935">
    <property type="term" value="C:small ribosomal subunit"/>
    <property type="evidence" value="ECO:0007669"/>
    <property type="project" value="InterPro"/>
</dbReference>
<dbReference type="GO" id="GO:0019843">
    <property type="term" value="F:rRNA binding"/>
    <property type="evidence" value="ECO:0007669"/>
    <property type="project" value="UniProtKB-UniRule"/>
</dbReference>
<dbReference type="GO" id="GO:0003735">
    <property type="term" value="F:structural constituent of ribosome"/>
    <property type="evidence" value="ECO:0007669"/>
    <property type="project" value="InterPro"/>
</dbReference>
<dbReference type="GO" id="GO:0042274">
    <property type="term" value="P:ribosomal small subunit biogenesis"/>
    <property type="evidence" value="ECO:0007669"/>
    <property type="project" value="TreeGrafter"/>
</dbReference>
<dbReference type="GO" id="GO:0006412">
    <property type="term" value="P:translation"/>
    <property type="evidence" value="ECO:0007669"/>
    <property type="project" value="UniProtKB-UniRule"/>
</dbReference>
<dbReference type="CDD" id="cd00165">
    <property type="entry name" value="S4"/>
    <property type="match status" value="1"/>
</dbReference>
<dbReference type="FunFam" id="1.10.1050.10:FF:000001">
    <property type="entry name" value="30S ribosomal protein S4"/>
    <property type="match status" value="1"/>
</dbReference>
<dbReference type="FunFam" id="3.10.290.10:FF:000001">
    <property type="entry name" value="30S ribosomal protein S4"/>
    <property type="match status" value="1"/>
</dbReference>
<dbReference type="Gene3D" id="1.10.1050.10">
    <property type="entry name" value="Ribosomal Protein S4 Delta 41, Chain A, domain 1"/>
    <property type="match status" value="1"/>
</dbReference>
<dbReference type="Gene3D" id="3.10.290.10">
    <property type="entry name" value="RNA-binding S4 domain"/>
    <property type="match status" value="1"/>
</dbReference>
<dbReference type="HAMAP" id="MF_01306_B">
    <property type="entry name" value="Ribosomal_uS4_B"/>
    <property type="match status" value="1"/>
</dbReference>
<dbReference type="InterPro" id="IPR022801">
    <property type="entry name" value="Ribosomal_uS4"/>
</dbReference>
<dbReference type="InterPro" id="IPR005709">
    <property type="entry name" value="Ribosomal_uS4_bac-type"/>
</dbReference>
<dbReference type="InterPro" id="IPR018079">
    <property type="entry name" value="Ribosomal_uS4_CS"/>
</dbReference>
<dbReference type="InterPro" id="IPR001912">
    <property type="entry name" value="Ribosomal_uS4_N"/>
</dbReference>
<dbReference type="InterPro" id="IPR002942">
    <property type="entry name" value="S4_RNA-bd"/>
</dbReference>
<dbReference type="InterPro" id="IPR036986">
    <property type="entry name" value="S4_RNA-bd_sf"/>
</dbReference>
<dbReference type="NCBIfam" id="NF003717">
    <property type="entry name" value="PRK05327.1"/>
    <property type="match status" value="1"/>
</dbReference>
<dbReference type="NCBIfam" id="TIGR01017">
    <property type="entry name" value="rpsD_bact"/>
    <property type="match status" value="1"/>
</dbReference>
<dbReference type="PANTHER" id="PTHR11831">
    <property type="entry name" value="30S 40S RIBOSOMAL PROTEIN"/>
    <property type="match status" value="1"/>
</dbReference>
<dbReference type="PANTHER" id="PTHR11831:SF4">
    <property type="entry name" value="SMALL RIBOSOMAL SUBUNIT PROTEIN US4M"/>
    <property type="match status" value="1"/>
</dbReference>
<dbReference type="Pfam" id="PF00163">
    <property type="entry name" value="Ribosomal_S4"/>
    <property type="match status" value="1"/>
</dbReference>
<dbReference type="Pfam" id="PF01479">
    <property type="entry name" value="S4"/>
    <property type="match status" value="1"/>
</dbReference>
<dbReference type="SMART" id="SM01390">
    <property type="entry name" value="Ribosomal_S4"/>
    <property type="match status" value="1"/>
</dbReference>
<dbReference type="SMART" id="SM00363">
    <property type="entry name" value="S4"/>
    <property type="match status" value="1"/>
</dbReference>
<dbReference type="SUPFAM" id="SSF55174">
    <property type="entry name" value="Alpha-L RNA-binding motif"/>
    <property type="match status" value="1"/>
</dbReference>
<dbReference type="PROSITE" id="PS00632">
    <property type="entry name" value="RIBOSOMAL_S4"/>
    <property type="match status" value="1"/>
</dbReference>
<dbReference type="PROSITE" id="PS50889">
    <property type="entry name" value="S4"/>
    <property type="match status" value="1"/>
</dbReference>
<protein>
    <recommendedName>
        <fullName evidence="1">Small ribosomal subunit protein uS4</fullName>
    </recommendedName>
    <alternativeName>
        <fullName evidence="2">30S ribosomal protein S4</fullName>
    </alternativeName>
</protein>
<accession>A8AZY6</accession>
<sequence length="203" mass="23101">MSRYTGPSWKQARRLGLSLTGTGKELARRNYVPGQHGPNNRSKLSEYGLQLAEKQKLRFTYGVGEKQFRNLFVQATKIKEGILGFNFMLLLERRLDNVVYRLGLATTRRQARQFVNHGHILVDGKRVDIPSYRVTPGQVISVREKSLKVPAILEAVEATLGRPAFVSFDAEKLEGSLTRLPERDEINPEINEALVVEFYNKML</sequence>